<comment type="function">
    <text evidence="1 2 3 4 6 7 8 10">This toxin stabilizes ryanodine receptor 1 (RyR1) opening in a long-lasting subconductance state (48%-60% of the full conductance state) (PubMed:10713267, PubMed:12869557, PubMed:27114612). Furthermore, it triggers calcium release from sarcoplasmic vesicles (6.6 nM are enough to induce a sharp release, and 60% of the total calcium is released after toxin (100 nM) addition) probably by acting as a cell-penetrating peptide (CPP) (PubMed:27114612). In addition, it has been shown to dose-dependently stimulate ryanodine binding to RyR1 (EC(50)=12.5-26.4 nM) (PubMed:12869557, PubMed:17291197, PubMed:17888395, PubMed:27114612). It also augments the bell-shaped calcium-[3H]ryanodine binding curve that is maximal at about 10 uM calcium concentration (PubMed:27114612). It binds a different site as ryanodine (PubMed:10713267). It acts synergistically with caffeine (By similarity). In vivo, intracerebroventricular injection into mice causes death (PubMed:10713267).</text>
</comment>
<comment type="subcellular location">
    <subcellularLocation>
        <location evidence="15">Secreted</location>
    </subcellularLocation>
</comment>
<comment type="tissue specificity">
    <text evidence="15">Expressed by the venom gland.</text>
</comment>
<comment type="domain">
    <text evidence="5">The presence of a 'disulfide through disulfide knot' structurally defines this protein as a knottin.</text>
</comment>
<comment type="PTM">
    <text evidence="9">The non-natural D-maurocalcin (a chiral analog of maurocalcin composed of D-amino acids) completely loses the ability to stimulate [3H]ryanodine binding and calcium release. Its protease resistance, combined with its efficient cell penetration at concentrations devoid of cell toxicity, suggests that it should be an excellent vector for in vivo applications.</text>
</comment>
<comment type="mass spectrometry" mass="3858.2" method="MALDI" evidence="4"/>
<comment type="toxic dose">
    <text evidence="4">LD(50) is 1 mg/kg mice by intracerebroventricular injection into mice.</text>
</comment>
<comment type="similarity">
    <text evidence="14">Belongs to the scorpion calcin family.</text>
</comment>
<accession>P60254</accession>
<evidence type="ECO:0000250" key="1">
    <source>
        <dbReference type="UniProtKB" id="A0A1L4BJ42"/>
    </source>
</evidence>
<evidence type="ECO:0000250" key="2">
    <source>
        <dbReference type="UniProtKB" id="B8QG00"/>
    </source>
</evidence>
<evidence type="ECO:0000250" key="3">
    <source>
        <dbReference type="UniProtKB" id="P59868"/>
    </source>
</evidence>
<evidence type="ECO:0000269" key="4">
    <source>
    </source>
</evidence>
<evidence type="ECO:0000269" key="5">
    <source>
    </source>
</evidence>
<evidence type="ECO:0000269" key="6">
    <source>
    </source>
</evidence>
<evidence type="ECO:0000269" key="7">
    <source>
    </source>
</evidence>
<evidence type="ECO:0000269" key="8">
    <source>
    </source>
</evidence>
<evidence type="ECO:0000269" key="9">
    <source>
    </source>
</evidence>
<evidence type="ECO:0000269" key="10">
    <source>
    </source>
</evidence>
<evidence type="ECO:0000303" key="11">
    <source>
    </source>
</evidence>
<evidence type="ECO:0000303" key="12">
    <source>
    </source>
</evidence>
<evidence type="ECO:0000303" key="13">
    <source>
    </source>
</evidence>
<evidence type="ECO:0000305" key="14"/>
<evidence type="ECO:0000305" key="15">
    <source>
    </source>
</evidence>
<evidence type="ECO:0000312" key="16">
    <source>
        <dbReference type="PDB" id="1C6W"/>
    </source>
</evidence>
<evidence type="ECO:0007829" key="17">
    <source>
        <dbReference type="PDB" id="1C6W"/>
    </source>
</evidence>
<organism>
    <name type="scientific">Scorpio palmatus</name>
    <name type="common">Israeli golden scorpion</name>
    <name type="synonym">Scorpio maurus palmatus</name>
    <dbReference type="NCBI Taxonomy" id="1662106"/>
    <lineage>
        <taxon>Eukaryota</taxon>
        <taxon>Metazoa</taxon>
        <taxon>Ecdysozoa</taxon>
        <taxon>Arthropoda</taxon>
        <taxon>Chelicerata</taxon>
        <taxon>Arachnida</taxon>
        <taxon>Scorpiones</taxon>
        <taxon>Iurida</taxon>
        <taxon>Scorpionoidea</taxon>
        <taxon>Scorpionidae</taxon>
        <taxon>Scorpioninae</taxon>
        <taxon>Scorpio</taxon>
    </lineage>
</organism>
<proteinExistence type="evidence at protein level"/>
<dbReference type="PDB" id="1C6W">
    <property type="method" value="NMR"/>
    <property type="chains" value="A=1-33"/>
</dbReference>
<dbReference type="PDBsum" id="1C6W"/>
<dbReference type="BMRB" id="P60254"/>
<dbReference type="SMR" id="P60254"/>
<dbReference type="TCDB" id="8.B.16.1.1">
    <property type="family name" value="the maurocalcine (maca) family"/>
</dbReference>
<dbReference type="EvolutionaryTrace" id="P60254"/>
<dbReference type="GO" id="GO:0005576">
    <property type="term" value="C:extracellular region"/>
    <property type="evidence" value="ECO:0007669"/>
    <property type="project" value="UniProtKB-SubCell"/>
</dbReference>
<dbReference type="GO" id="GO:0019855">
    <property type="term" value="F:calcium channel inhibitor activity"/>
    <property type="evidence" value="ECO:0007669"/>
    <property type="project" value="InterPro"/>
</dbReference>
<dbReference type="GO" id="GO:0090729">
    <property type="term" value="F:toxin activity"/>
    <property type="evidence" value="ECO:0007669"/>
    <property type="project" value="UniProtKB-KW"/>
</dbReference>
<dbReference type="InterPro" id="IPR012632">
    <property type="entry name" value="Scorpion_calcine"/>
</dbReference>
<dbReference type="Pfam" id="PF08099">
    <property type="entry name" value="Toxin_27"/>
    <property type="match status" value="1"/>
</dbReference>
<dbReference type="SUPFAM" id="SSF57059">
    <property type="entry name" value="omega toxin-like"/>
    <property type="match status" value="1"/>
</dbReference>
<dbReference type="PROSITE" id="PS60028">
    <property type="entry name" value="SCORPION_CALCINE"/>
    <property type="match status" value="1"/>
</dbReference>
<protein>
    <recommendedName>
        <fullName evidence="13">Maurocalcin</fullName>
        <shortName evidence="11 12">MCa</shortName>
    </recommendedName>
    <alternativeName>
        <fullName evidence="11 12">Maurocalcine</fullName>
    </alternativeName>
</protein>
<sequence length="33" mass="3865">GDCLPHLKLCKENKDCCSKKCKRRGTNIEKRCR</sequence>
<name>CAMAU_SCOPA</name>
<reference key="1">
    <citation type="journal article" date="2000" name="FEBS Lett.">
        <title>Chemical synthesis and characterization of maurocalcine, a scorpion toxin that activates Ca(2+) release channel/ryanodine receptors.</title>
        <authorList>
            <person name="Fajloun Z."/>
            <person name="Kharrat R."/>
            <person name="Chen L."/>
            <person name="Lecomte C."/>
            <person name="Di Luccio E."/>
            <person name="Bichet D."/>
            <person name="El Ayeb M."/>
            <person name="Rochat H."/>
            <person name="Allen P.D."/>
            <person name="Pessah I.N."/>
            <person name="De Waard M."/>
            <person name="Sabatier J.-M."/>
        </authorList>
    </citation>
    <scope>PROTEIN SEQUENCE</scope>
    <scope>SYNTHESIS</scope>
    <scope>FUNCTION</scope>
    <scope>TOXIC DOSE</scope>
    <scope>MASS SPECTROMETRY</scope>
</reference>
<reference key="2">
    <citation type="journal article" date="2003" name="J. Biol. Chem.">
        <title>Critical amino acid residues determine the binding affinity and the Ca2+ release efficacy of maurocalcine in skeletal muscle cells.</title>
        <authorList>
            <person name="Esteve E."/>
            <person name="Smida-Rezgui S."/>
            <person name="Sarkozi S."/>
            <person name="Szegedi C."/>
            <person name="Regaya I."/>
            <person name="Chen L."/>
            <person name="Altafaj X."/>
            <person name="Rochat H."/>
            <person name="Allen P."/>
            <person name="Pessah I.N."/>
            <person name="Marty I."/>
            <person name="Sabatier J.M."/>
            <person name="Jona I."/>
            <person name="De Waard M."/>
            <person name="Ronjat M."/>
        </authorList>
    </citation>
    <scope>FUNCTION</scope>
    <scope>MUTAGENESIS OF LYS-8; LYS-19; LYS-20; LYS-22; ARG-23; ARG-24 AND THR-26</scope>
</reference>
<reference key="3">
    <citation type="journal article" date="2007" name="Biochem. J.">
        <title>Hemicalcin, a new toxin from the Iranian scorpion Hemiscorpius lepturus which is active on ryanodine-sensitive Ca2+ channels.</title>
        <authorList>
            <person name="Shahbazzadeh D."/>
            <person name="Srairi-Abid N."/>
            <person name="Feng W."/>
            <person name="Ram N."/>
            <person name="Borchani L."/>
            <person name="Ronjat M."/>
            <person name="Akbari A."/>
            <person name="Pessah I.N."/>
            <person name="De Waard M."/>
            <person name="El Ayeb M."/>
        </authorList>
    </citation>
    <scope>FUNCTION</scope>
    <source>
        <tissue>Venom</tissue>
    </source>
</reference>
<reference key="4">
    <citation type="journal article" date="2007" name="Biochim. Biophys. Acta">
        <title>Critical amino acid residues of maurocalcine involved in pharmacology, lipid interaction and cell penetration.</title>
        <authorList>
            <person name="Mabrouk K."/>
            <person name="Ram N."/>
            <person name="Boisseau S."/>
            <person name="Strappazzon F."/>
            <person name="Rehaim A."/>
            <person name="Sadoul R."/>
            <person name="Darbon H."/>
            <person name="Ronjat M."/>
            <person name="De Waard M."/>
        </authorList>
    </citation>
    <scope>MUTAGENESIS OF ASP-2; LEU-4; PRO-5; HIS-6; LEU-7; LYS-8; LEU-9; GLU-12; ASN-13; ASP-15; LYS-19; LYS-20; ARG-23; ARG-24 AND THR-26</scope>
</reference>
<reference key="5">
    <citation type="journal article" date="2010" name="J. Biol. Chem.">
        <title>D-Maurocalcine, a pharmacologically inert efficient cell-penetrating peptide analogue.</title>
        <authorList>
            <person name="Poillot C."/>
            <person name="Dridi K."/>
            <person name="Bichraoui H."/>
            <person name="Pecher J."/>
            <person name="Alphonse S."/>
            <person name="Douzi B."/>
            <person name="Ronjat M."/>
            <person name="Darbon H."/>
            <person name="De Waard M."/>
        </authorList>
    </citation>
    <scope>FUNCTION OF THE SYNTHETIC D-MAUROCALCINE</scope>
</reference>
<reference key="6">
    <citation type="journal article" date="2016" name="J. Gen. Physiol.">
        <title>Structure-function relationships of peptides forming the calcin family of ryanodine receptor ligands.</title>
        <authorList>
            <person name="Xiao L."/>
            <person name="Gurrola G.B."/>
            <person name="Zhang J."/>
            <person name="Valdivia C.R."/>
            <person name="SanMartin M."/>
            <person name="Zamudio F.Z."/>
            <person name="Zhang L."/>
            <person name="Possani L.D."/>
            <person name="Valdivia H.H."/>
        </authorList>
    </citation>
    <scope>FUNCTION</scope>
    <scope>SYNTHESIS</scope>
    <scope>3D-STRUCTURE MODELING</scope>
</reference>
<reference key="7">
    <citation type="journal article" date="2000" name="Proteins">
        <title>A new fold in the scorpion toxin family, associated with an activity on a ryanodine-sensitive calcium channel.</title>
        <authorList>
            <person name="Mosbah A."/>
            <person name="Kharrat R."/>
            <person name="Fajloun Z."/>
            <person name="Renisio J.-G."/>
            <person name="Blanc E."/>
            <person name="Sabatier J.-M."/>
            <person name="El Ayeb M."/>
            <person name="Darbon H."/>
        </authorList>
    </citation>
    <scope>STRUCTURE BY NMR</scope>
    <scope>DISULFIDE BONDS</scope>
</reference>
<feature type="peptide" id="PRO_0000044950" description="Maurocalcin" evidence="4">
    <location>
        <begin position="1"/>
        <end position="33"/>
    </location>
</feature>
<feature type="region of interest" description="Essential for stimulation of [3H]ryanodine binding to RYR" evidence="6 8">
    <location>
        <begin position="22"/>
        <end position="24"/>
    </location>
</feature>
<feature type="site" description="Important for stimulation of [3H]ryanodine binding to RYR" evidence="6 8">
    <location>
        <position position="8"/>
    </location>
</feature>
<feature type="site" description="Mildly important for stimulation of [3H]ryanodine binding to RYR" evidence="6 8">
    <location>
        <position position="19"/>
    </location>
</feature>
<feature type="site" description="Mildly important for stimulation of [3H]ryanodine binding to RYR" evidence="6 8">
    <location>
        <position position="20"/>
    </location>
</feature>
<feature type="site" description="Mildly important for stimulation of [3H]ryanodine binding to RYR" evidence="6 8">
    <location>
        <position position="26"/>
    </location>
</feature>
<feature type="site" description="Essential for stimulation of [3H]ryanodine binding to RYR1" evidence="3">
    <location>
        <position position="31"/>
    </location>
</feature>
<feature type="site" description="Essential for stimulation of [3H]ryanodine binding to RYR1" evidence="3">
    <location>
        <position position="33"/>
    </location>
</feature>
<feature type="disulfide bond" evidence="5 16">
    <location>
        <begin position="3"/>
        <end position="17"/>
    </location>
</feature>
<feature type="disulfide bond" evidence="5 16">
    <location>
        <begin position="10"/>
        <end position="21"/>
    </location>
</feature>
<feature type="disulfide bond" evidence="5 16">
    <location>
        <begin position="16"/>
        <end position="32"/>
    </location>
</feature>
<feature type="mutagenesis site" description="Biotinylated maurocalcin: 3-fold increase of stimulation of [3H]ryanodine binding to RYR1, and no change in cell-penetrating properties." evidence="8">
    <original>D</original>
    <variation>A</variation>
    <location>
        <position position="2"/>
    </location>
</feature>
<feature type="mutagenesis site" description="Biotinylated MCa: No significant change in stimulation of [3H]ryanodine binding to RYR1, and low decrease in cell-penetrating properties." evidence="8">
    <original>L</original>
    <variation>A</variation>
    <location>
        <position position="4"/>
    </location>
</feature>
<feature type="mutagenesis site" description="Biotinylated MCa: 4-fold increase of stimulation of [3H]ryanodine binding to RYR1, and no change in cell-penetrating properties." evidence="8">
    <original>P</original>
    <variation>A</variation>
    <location>
        <position position="5"/>
    </location>
</feature>
<feature type="mutagenesis site" description="Biotinylated MCa: No significant change in stimulation of [3H]ryanodine binding to RYR1, and important increase in cell-penetrating properties." evidence="8">
    <original>H</original>
    <variation>A</variation>
    <location>
        <position position="6"/>
    </location>
</feature>
<feature type="mutagenesis site" description="Biotinylated MCa: 2-fold decrease of stimulation of [3H]ryanodine binding to RYR1, and low decrease in cell-penetrating properties." evidence="8">
    <original>L</original>
    <variation>A</variation>
    <location>
        <position position="7"/>
    </location>
</feature>
<feature type="mutagenesis site" description="16-fold decrease of stimulation of [3H]ryanodine binding to RYR1. Biotinylated MCa: 3-fold decrease of stimulation of [3H]ryanodine binding to RYR1, and no change in cell-penetrating properties." evidence="6 8">
    <original>K</original>
    <variation>A</variation>
    <location>
        <position position="8"/>
    </location>
</feature>
<feature type="mutagenesis site" description="Biotinylated MCa: 2-fold increase of stimulation of [3H]ryanodine binding to RYR1, and no change in cell-penetrating properties." evidence="8">
    <original>L</original>
    <variation>A</variation>
    <location>
        <position position="9"/>
    </location>
</feature>
<feature type="mutagenesis site" description="Biotinylated MCa: 4.8-fold increase of stimulation of [3H]ryanodine binding to RYR1, and very important increase in cell-penetrating properties (PC(50)=113 nM)." evidence="8">
    <original>E</original>
    <variation>A</variation>
    <location>
        <position position="12"/>
    </location>
</feature>
<feature type="mutagenesis site" description="Biotinylated MCa: 2.6-fold increase of stimulation of [3H]ryanodine binding to RYR1, and low decrease in cell-penetrating properties." evidence="8">
    <original>N</original>
    <variation>A</variation>
    <location>
        <position position="13"/>
    </location>
</feature>
<feature type="mutagenesis site" description="Biotinylated MCa: 3.7-fold increase of stimulation of [3H]ryanodine binding to RYR1, and no change in cell-penetrating properties." evidence="8">
    <original>D</original>
    <variation>A</variation>
    <location>
        <position position="15"/>
    </location>
</feature>
<feature type="mutagenesis site" description="6-fold decrease of stimulation of [3H]ryanodine binding to RYR1. Biotinylated MCa: 2-fold decrease of stimulation of [3H]ryanodine binding to RYR1, and important decrease in cell-penetrating properties." evidence="6 8">
    <original>K</original>
    <variation>A</variation>
    <location>
        <position position="19"/>
    </location>
</feature>
<feature type="mutagenesis site" description="5-fold decrease of stimulation of [3H]ryanodine binding to RYR1. Biotinylated MCa: 3-fold decrease of stimulation of [3H]ryanodine binding to RYR1, and important decrease in cell-penetrating properties (PC(50)=1350 nM)." evidence="6 8">
    <original>K</original>
    <variation>A</variation>
    <location>
        <position position="20"/>
    </location>
</feature>
<feature type="mutagenesis site" description="35-fold decrease of stimulation of [3H]ryanodine binding to RYR1. Biotinylated MCa: 4.6-fold decrease of stimulation of [3H]ryanodine binding to RYR1, and low decrease in cell-penetrating properties." evidence="6 8">
    <original>K</original>
    <variation>A</variation>
    <location>
        <position position="22"/>
    </location>
</feature>
<feature type="mutagenesis site" description="13-fold decrease of stimulation of [3H]ryanodine binding to RYR1, but loss of induction of calcium release from sarcoplasmic vesicles. Biotinylated MCa: 9-fold decrease of stimulation of [3H]ryanodine binding to RYR1." evidence="6 8">
    <original>R</original>
    <variation>A</variation>
    <location>
        <position position="23"/>
    </location>
</feature>
<feature type="mutagenesis site" description="Loss of stimulation of [3H]ryanodine binding to RYR1, loss of induction of calcium release from sarcoplasmic vesicles, and loss of induction of long-lasting subconductance state. Biotinylated MCa: Loss of stimulation of [3H]ryanodine binding to RYR1, and low decrease in cell-penetrating properties." evidence="6 8">
    <original>R</original>
    <variation>A</variation>
    <location>
        <position position="24"/>
    </location>
</feature>
<feature type="mutagenesis site" description="4-fold decrease of stimulation of [3H]ryanodine binding to RYR1. Biotinylated MCa: 3.4-fold decrease of stimulation of [3H]ryanodine binding to RYR1." evidence="6 8">
    <original>T</original>
    <variation>A</variation>
    <location>
        <position position="26"/>
    </location>
</feature>
<feature type="strand" evidence="17">
    <location>
        <begin position="9"/>
        <end position="12"/>
    </location>
</feature>
<feature type="helix" evidence="17">
    <location>
        <begin position="13"/>
        <end position="15"/>
    </location>
</feature>
<feature type="strand" evidence="17">
    <location>
        <begin position="20"/>
        <end position="22"/>
    </location>
</feature>
<feature type="strand" evidence="17">
    <location>
        <begin position="25"/>
        <end position="28"/>
    </location>
</feature>
<feature type="strand" evidence="17">
    <location>
        <begin position="30"/>
        <end position="33"/>
    </location>
</feature>
<keyword id="KW-0002">3D-structure</keyword>
<keyword id="KW-0108">Calcium channel impairing toxin</keyword>
<keyword id="KW-0903">Direct protein sequencing</keyword>
<keyword id="KW-1015">Disulfide bond</keyword>
<keyword id="KW-0872">Ion channel impairing toxin</keyword>
<keyword id="KW-0960">Knottin</keyword>
<keyword id="KW-0528">Neurotoxin</keyword>
<keyword id="KW-1219">Ryanodine-sensitive calcium-release channel impairing toxin</keyword>
<keyword id="KW-0964">Secreted</keyword>
<keyword id="KW-0800">Toxin</keyword>